<protein>
    <recommendedName>
        <fullName evidence="4">Multiple C2 domain and transmembrane region protein 5</fullName>
    </recommendedName>
</protein>
<keyword id="KW-0106">Calcium</keyword>
<keyword id="KW-0256">Endoplasmic reticulum</keyword>
<keyword id="KW-0328">Glycosyltransferase</keyword>
<keyword id="KW-0472">Membrane</keyword>
<keyword id="KW-0479">Metal-binding</keyword>
<keyword id="KW-1185">Reference proteome</keyword>
<keyword id="KW-0677">Repeat</keyword>
<keyword id="KW-0808">Transferase</keyword>
<keyword id="KW-0812">Transmembrane</keyword>
<keyword id="KW-1133">Transmembrane helix</keyword>
<name>MCTP5_ARATH</name>
<organism>
    <name type="scientific">Arabidopsis thaliana</name>
    <name type="common">Mouse-ear cress</name>
    <dbReference type="NCBI Taxonomy" id="3702"/>
    <lineage>
        <taxon>Eukaryota</taxon>
        <taxon>Viridiplantae</taxon>
        <taxon>Streptophyta</taxon>
        <taxon>Embryophyta</taxon>
        <taxon>Tracheophyta</taxon>
        <taxon>Spermatophyta</taxon>
        <taxon>Magnoliopsida</taxon>
        <taxon>eudicotyledons</taxon>
        <taxon>Gunneridae</taxon>
        <taxon>Pentapetalae</taxon>
        <taxon>rosids</taxon>
        <taxon>malvids</taxon>
        <taxon>Brassicales</taxon>
        <taxon>Brassicaceae</taxon>
        <taxon>Camelineae</taxon>
        <taxon>Arabidopsis</taxon>
    </lineage>
</organism>
<accession>Q9LXU2</accession>
<proteinExistence type="evidence at transcript level"/>
<comment type="function">
    <text evidence="4">May function as a signaling molecule by regulating the trafficking of other regulators.</text>
</comment>
<comment type="cofactor">
    <cofactor evidence="2">
        <name>Ca(2+)</name>
        <dbReference type="ChEBI" id="CHEBI:29108"/>
    </cofactor>
</comment>
<comment type="subcellular location">
    <subcellularLocation>
        <location evidence="3">Endoplasmic reticulum membrane</location>
        <topology evidence="1">Multi-pass membrane protein</topology>
    </subcellularLocation>
</comment>
<comment type="tissue specificity">
    <text evidence="3">Highly expressed in roots meristems and shoot apical meristems (SAMs) (PubMed:29259105). Observed in flowers (PubMed:29259105).</text>
</comment>
<comment type="developmental stage">
    <text evidence="3">Present in developing flowers, particularly in pistils.</text>
</comment>
<comment type="similarity">
    <text evidence="5">Belongs to the MCTP family.</text>
</comment>
<sequence length="769" mass="88510">MQKPGQNIDFALKETSPKIGAGSVTGDKLCSTYDLVEQMHYLYVRVVKAKELPGKDVTGSCDPYVEVKLGNYRGMTKHFEKRSNPEWKQVFAFSKERIQASILEVVVKDKDVVLDDLIGRIMFDLNEIPKRVPPDSPLAPQWYRLEDRHGRKVKGELMLAVWMGTQADEAFSDAWHSDAATVGPEGVTHIRSKVYLSPKLWYVRVNVIEAQDLIPHDKTKFPEVYVKAMLGNQTLRTRISQTKTLNPMWNEDLMFVVAEPFEEALILAVEDRVAPNKDETLGRCAIPLQNVQRRLDHRPLNSRWFNLEKHIMVEGEQKEIKFASRIHLRIFLEGGYHVLDESTHYSSDLRPTAKQLWKPSIGLLEVGIISAHGLMPMKSKDGKGTTDAYCVAKYGQKWIRTRTIVDSFTPKWNEQYTWEVFDTCTVITFGAFDNGHIPGGSGKDLRIGKVRIRLSTLEADRIYTHSYPLLVFHPSGIKKTGEIQLAVRFTCLSLINMLHMYSQPLLPKMHYIHPLSVLQLDSLRHQAMNIVSARLNRAEPPLRKEIVEYMLDVDSHMWSMRRSKANFFRIMNVLSGLIAVGKWFDQICNWRNPITTILIHVLFIILVLYPELILPTVFLYLFLIGIWNFRWRPRHPPHMDTRLSHADAVHPDELDEEFDTFPTSRSSEIVRMRYDRLRSIGGRVQTVIGDLATQGERFLSLLSWRDPRATTLFVLFCLIAAIVLYVTPFQVVALLAGIYVLRHPRFRHKLPSVPLNLFRRLPARSDSLL</sequence>
<reference key="1">
    <citation type="journal article" date="2000" name="Nature">
        <title>Sequence and analysis of chromosome 5 of the plant Arabidopsis thaliana.</title>
        <authorList>
            <person name="Tabata S."/>
            <person name="Kaneko T."/>
            <person name="Nakamura Y."/>
            <person name="Kotani H."/>
            <person name="Kato T."/>
            <person name="Asamizu E."/>
            <person name="Miyajima N."/>
            <person name="Sasamoto S."/>
            <person name="Kimura T."/>
            <person name="Hosouchi T."/>
            <person name="Kawashima K."/>
            <person name="Kohara M."/>
            <person name="Matsumoto M."/>
            <person name="Matsuno A."/>
            <person name="Muraki A."/>
            <person name="Nakayama S."/>
            <person name="Nakazaki N."/>
            <person name="Naruo K."/>
            <person name="Okumura S."/>
            <person name="Shinpo S."/>
            <person name="Takeuchi C."/>
            <person name="Wada T."/>
            <person name="Watanabe A."/>
            <person name="Yamada M."/>
            <person name="Yasuda M."/>
            <person name="Sato S."/>
            <person name="de la Bastide M."/>
            <person name="Huang E."/>
            <person name="Spiegel L."/>
            <person name="Gnoj L."/>
            <person name="O'Shaughnessy A."/>
            <person name="Preston R."/>
            <person name="Habermann K."/>
            <person name="Murray J."/>
            <person name="Johnson D."/>
            <person name="Rohlfing T."/>
            <person name="Nelson J."/>
            <person name="Stoneking T."/>
            <person name="Pepin K."/>
            <person name="Spieth J."/>
            <person name="Sekhon M."/>
            <person name="Armstrong J."/>
            <person name="Becker M."/>
            <person name="Belter E."/>
            <person name="Cordum H."/>
            <person name="Cordes M."/>
            <person name="Courtney L."/>
            <person name="Courtney W."/>
            <person name="Dante M."/>
            <person name="Du H."/>
            <person name="Edwards J."/>
            <person name="Fryman J."/>
            <person name="Haakensen B."/>
            <person name="Lamar E."/>
            <person name="Latreille P."/>
            <person name="Leonard S."/>
            <person name="Meyer R."/>
            <person name="Mulvaney E."/>
            <person name="Ozersky P."/>
            <person name="Riley A."/>
            <person name="Strowmatt C."/>
            <person name="Wagner-McPherson C."/>
            <person name="Wollam A."/>
            <person name="Yoakum M."/>
            <person name="Bell M."/>
            <person name="Dedhia N."/>
            <person name="Parnell L."/>
            <person name="Shah R."/>
            <person name="Rodriguez M."/>
            <person name="Hoon See L."/>
            <person name="Vil D."/>
            <person name="Baker J."/>
            <person name="Kirchoff K."/>
            <person name="Toth K."/>
            <person name="King L."/>
            <person name="Bahret A."/>
            <person name="Miller B."/>
            <person name="Marra M.A."/>
            <person name="Martienssen R."/>
            <person name="McCombie W.R."/>
            <person name="Wilson R.K."/>
            <person name="Murphy G."/>
            <person name="Bancroft I."/>
            <person name="Volckaert G."/>
            <person name="Wambutt R."/>
            <person name="Duesterhoeft A."/>
            <person name="Stiekema W."/>
            <person name="Pohl T."/>
            <person name="Entian K.-D."/>
            <person name="Terryn N."/>
            <person name="Hartley N."/>
            <person name="Bent E."/>
            <person name="Johnson S."/>
            <person name="Langham S.-A."/>
            <person name="McCullagh B."/>
            <person name="Robben J."/>
            <person name="Grymonprez B."/>
            <person name="Zimmermann W."/>
            <person name="Ramsperger U."/>
            <person name="Wedler H."/>
            <person name="Balke K."/>
            <person name="Wedler E."/>
            <person name="Peters S."/>
            <person name="van Staveren M."/>
            <person name="Dirkse W."/>
            <person name="Mooijman P."/>
            <person name="Klein Lankhorst R."/>
            <person name="Weitzenegger T."/>
            <person name="Bothe G."/>
            <person name="Rose M."/>
            <person name="Hauf J."/>
            <person name="Berneiser S."/>
            <person name="Hempel S."/>
            <person name="Feldpausch M."/>
            <person name="Lamberth S."/>
            <person name="Villarroel R."/>
            <person name="Gielen J."/>
            <person name="Ardiles W."/>
            <person name="Bents O."/>
            <person name="Lemcke K."/>
            <person name="Kolesov G."/>
            <person name="Mayer K.F.X."/>
            <person name="Rudd S."/>
            <person name="Schoof H."/>
            <person name="Schueller C."/>
            <person name="Zaccaria P."/>
            <person name="Mewes H.-W."/>
            <person name="Bevan M."/>
            <person name="Fransz P.F."/>
        </authorList>
    </citation>
    <scope>NUCLEOTIDE SEQUENCE [LARGE SCALE GENOMIC DNA]</scope>
    <source>
        <strain>cv. Columbia</strain>
    </source>
</reference>
<reference key="2">
    <citation type="journal article" date="2017" name="Plant J.">
        <title>Araport11: a complete reannotation of the Arabidopsis thaliana reference genome.</title>
        <authorList>
            <person name="Cheng C.Y."/>
            <person name="Krishnakumar V."/>
            <person name="Chan A.P."/>
            <person name="Thibaud-Nissen F."/>
            <person name="Schobel S."/>
            <person name="Town C.D."/>
        </authorList>
    </citation>
    <scope>GENOME REANNOTATION</scope>
    <source>
        <strain>cv. Columbia</strain>
    </source>
</reference>
<reference key="3">
    <citation type="journal article" date="2018" name="Plant Physiol.">
        <title>Characterization of multiple C2 domain and transmembrane region proteins in Arabidopsis.</title>
        <authorList>
            <person name="Liu L."/>
            <person name="Li C."/>
            <person name="Liang Z."/>
            <person name="Yu H."/>
        </authorList>
    </citation>
    <scope>TISSUE SPECIFICITY</scope>
    <scope>DEVELOPMENTAL STAGE</scope>
    <scope>SUBCELLULAR LOCATION</scope>
    <scope>GENE FAMILY</scope>
    <scope>NOMENCLATURE</scope>
    <source>
        <strain>cv. Columbia</strain>
    </source>
</reference>
<gene>
    <name evidence="4" type="primary">MCTP5</name>
    <name evidence="6" type="ordered locus">At5g12970</name>
    <name evidence="7" type="ORF">T24H18.140</name>
</gene>
<dbReference type="EMBL" id="AL353013">
    <property type="protein sequence ID" value="CAB88261.1"/>
    <property type="molecule type" value="Genomic_DNA"/>
</dbReference>
<dbReference type="EMBL" id="CP002688">
    <property type="protein sequence ID" value="AED91836.1"/>
    <property type="molecule type" value="Genomic_DNA"/>
</dbReference>
<dbReference type="PIR" id="T49911">
    <property type="entry name" value="T49911"/>
</dbReference>
<dbReference type="RefSeq" id="NP_196801.1">
    <property type="nucleotide sequence ID" value="NM_121300.3"/>
</dbReference>
<dbReference type="SMR" id="Q9LXU2"/>
<dbReference type="FunCoup" id="Q9LXU2">
    <property type="interactions" value="397"/>
</dbReference>
<dbReference type="STRING" id="3702.Q9LXU2"/>
<dbReference type="iPTMnet" id="Q9LXU2"/>
<dbReference type="PaxDb" id="3702-AT5G12970.1"/>
<dbReference type="ProteomicsDB" id="192070"/>
<dbReference type="EnsemblPlants" id="AT5G12970.1">
    <property type="protein sequence ID" value="AT5G12970.1"/>
    <property type="gene ID" value="AT5G12970"/>
</dbReference>
<dbReference type="GeneID" id="831137"/>
<dbReference type="Gramene" id="AT5G12970.1">
    <property type="protein sequence ID" value="AT5G12970.1"/>
    <property type="gene ID" value="AT5G12970"/>
</dbReference>
<dbReference type="KEGG" id="ath:AT5G12970"/>
<dbReference type="Araport" id="AT5G12970"/>
<dbReference type="TAIR" id="AT5G12970">
    <property type="gene designation" value="MCTP5"/>
</dbReference>
<dbReference type="eggNOG" id="ENOG502QVV1">
    <property type="taxonomic scope" value="Eukaryota"/>
</dbReference>
<dbReference type="HOGENOM" id="CLU_003762_1_0_1"/>
<dbReference type="InParanoid" id="Q9LXU2"/>
<dbReference type="OMA" id="LDQICNW"/>
<dbReference type="PRO" id="PR:Q9LXU2"/>
<dbReference type="Proteomes" id="UP000006548">
    <property type="component" value="Chromosome 5"/>
</dbReference>
<dbReference type="ExpressionAtlas" id="Q9LXU2">
    <property type="expression patterns" value="baseline and differential"/>
</dbReference>
<dbReference type="GO" id="GO:0005789">
    <property type="term" value="C:endoplasmic reticulum membrane"/>
    <property type="evidence" value="ECO:0007669"/>
    <property type="project" value="UniProtKB-SubCell"/>
</dbReference>
<dbReference type="GO" id="GO:0009506">
    <property type="term" value="C:plasmodesma"/>
    <property type="evidence" value="ECO:0007005"/>
    <property type="project" value="TAIR"/>
</dbReference>
<dbReference type="GO" id="GO:0016757">
    <property type="term" value="F:glycosyltransferase activity"/>
    <property type="evidence" value="ECO:0007669"/>
    <property type="project" value="UniProtKB-KW"/>
</dbReference>
<dbReference type="GO" id="GO:0046872">
    <property type="term" value="F:metal ion binding"/>
    <property type="evidence" value="ECO:0007669"/>
    <property type="project" value="UniProtKB-KW"/>
</dbReference>
<dbReference type="CDD" id="cd08378">
    <property type="entry name" value="C2B_MCTP_PRT_plant"/>
    <property type="match status" value="1"/>
</dbReference>
<dbReference type="CDD" id="cd04019">
    <property type="entry name" value="C2C_MCTP_PRT_plant"/>
    <property type="match status" value="1"/>
</dbReference>
<dbReference type="CDD" id="cd08379">
    <property type="entry name" value="C2D_MCTP_PRT_plant"/>
    <property type="match status" value="1"/>
</dbReference>
<dbReference type="FunFam" id="2.60.40.150:FF:000090">
    <property type="entry name" value="C2 domain-containing protein"/>
    <property type="match status" value="1"/>
</dbReference>
<dbReference type="FunFam" id="2.60.40.150:FF:000119">
    <property type="entry name" value="C2 domain-containing protein"/>
    <property type="match status" value="1"/>
</dbReference>
<dbReference type="FunFam" id="2.60.40.150:FF:000128">
    <property type="entry name" value="C2 domain-containing protein"/>
    <property type="match status" value="1"/>
</dbReference>
<dbReference type="Gene3D" id="2.60.40.150">
    <property type="entry name" value="C2 domain"/>
    <property type="match status" value="3"/>
</dbReference>
<dbReference type="InterPro" id="IPR000008">
    <property type="entry name" value="C2_dom"/>
</dbReference>
<dbReference type="InterPro" id="IPR035892">
    <property type="entry name" value="C2_domain_sf"/>
</dbReference>
<dbReference type="InterPro" id="IPR047257">
    <property type="entry name" value="C2B_MCTP_PRT_plant"/>
</dbReference>
<dbReference type="InterPro" id="IPR047258">
    <property type="entry name" value="C2C_MCTP_PRT_plant"/>
</dbReference>
<dbReference type="InterPro" id="IPR047255">
    <property type="entry name" value="C2D_MCTP_PRT_plant"/>
</dbReference>
<dbReference type="InterPro" id="IPR013583">
    <property type="entry name" value="MCTP_C"/>
</dbReference>
<dbReference type="InterPro" id="IPR047259">
    <property type="entry name" value="QUIRKY-like"/>
</dbReference>
<dbReference type="PANTHER" id="PTHR31425:SF44">
    <property type="entry name" value="MULTIPLE C2 DOMAIN AND TRANSMEMBRANE REGION PROTEIN 5"/>
    <property type="match status" value="1"/>
</dbReference>
<dbReference type="PANTHER" id="PTHR31425">
    <property type="entry name" value="PHOSPHORIBOSYLANTHRANILATE TRANSFERASE ISOFORM 1"/>
    <property type="match status" value="1"/>
</dbReference>
<dbReference type="Pfam" id="PF00168">
    <property type="entry name" value="C2"/>
    <property type="match status" value="3"/>
</dbReference>
<dbReference type="Pfam" id="PF08372">
    <property type="entry name" value="PRT_C"/>
    <property type="match status" value="1"/>
</dbReference>
<dbReference type="SMART" id="SM00239">
    <property type="entry name" value="C2"/>
    <property type="match status" value="3"/>
</dbReference>
<dbReference type="SUPFAM" id="SSF49562">
    <property type="entry name" value="C2 domain (Calcium/lipid-binding domain, CaLB)"/>
    <property type="match status" value="3"/>
</dbReference>
<dbReference type="PROSITE" id="PS50004">
    <property type="entry name" value="C2"/>
    <property type="match status" value="3"/>
</dbReference>
<evidence type="ECO:0000255" key="1"/>
<evidence type="ECO:0000255" key="2">
    <source>
        <dbReference type="PROSITE-ProRule" id="PRU00041"/>
    </source>
</evidence>
<evidence type="ECO:0000269" key="3">
    <source>
    </source>
</evidence>
<evidence type="ECO:0000303" key="4">
    <source>
    </source>
</evidence>
<evidence type="ECO:0000305" key="5"/>
<evidence type="ECO:0000312" key="6">
    <source>
        <dbReference type="Araport" id="AT5G12970"/>
    </source>
</evidence>
<evidence type="ECO:0000312" key="7">
    <source>
        <dbReference type="EMBL" id="CAB88261.1"/>
    </source>
</evidence>
<feature type="chain" id="PRO_0000457899" description="Multiple C2 domain and transmembrane region protein 5">
    <location>
        <begin position="1"/>
        <end position="769"/>
    </location>
</feature>
<feature type="transmembrane region" description="Helical" evidence="1">
    <location>
        <begin position="604"/>
        <end position="624"/>
    </location>
</feature>
<feature type="transmembrane region" description="Helical" evidence="1">
    <location>
        <begin position="712"/>
        <end position="732"/>
    </location>
</feature>
<feature type="domain" description="C2 1" evidence="2">
    <location>
        <begin position="23"/>
        <end position="143"/>
    </location>
</feature>
<feature type="domain" description="C2 2" evidence="2">
    <location>
        <begin position="184"/>
        <end position="305"/>
    </location>
</feature>
<feature type="domain" description="C2 3" evidence="2">
    <location>
        <begin position="345"/>
        <end position="467"/>
    </location>
</feature>
<feature type="binding site" evidence="2">
    <location>
        <position position="56"/>
    </location>
    <ligand>
        <name>Ca(2+)</name>
        <dbReference type="ChEBI" id="CHEBI:29108"/>
        <label>1</label>
    </ligand>
</feature>
<feature type="binding site" evidence="2">
    <location>
        <position position="56"/>
    </location>
    <ligand>
        <name>Ca(2+)</name>
        <dbReference type="ChEBI" id="CHEBI:29108"/>
        <label>2</label>
    </ligand>
</feature>
<feature type="binding site" evidence="2">
    <location>
        <position position="62"/>
    </location>
    <ligand>
        <name>Ca(2+)</name>
        <dbReference type="ChEBI" id="CHEBI:29108"/>
        <label>1</label>
    </ligand>
</feature>
<feature type="binding site" evidence="2">
    <location>
        <position position="109"/>
    </location>
    <ligand>
        <name>Ca(2+)</name>
        <dbReference type="ChEBI" id="CHEBI:29108"/>
        <label>1</label>
    </ligand>
</feature>
<feature type="binding site" evidence="2">
    <location>
        <position position="109"/>
    </location>
    <ligand>
        <name>Ca(2+)</name>
        <dbReference type="ChEBI" id="CHEBI:29108"/>
        <label>2</label>
    </ligand>
</feature>
<feature type="binding site" evidence="2">
    <location>
        <position position="111"/>
    </location>
    <ligand>
        <name>Ca(2+)</name>
        <dbReference type="ChEBI" id="CHEBI:29108"/>
        <label>1</label>
    </ligand>
</feature>
<feature type="binding site" evidence="2">
    <location>
        <position position="111"/>
    </location>
    <ligand>
        <name>Ca(2+)</name>
        <dbReference type="ChEBI" id="CHEBI:29108"/>
        <label>2</label>
    </ligand>
</feature>
<feature type="binding site" evidence="2">
    <location>
        <position position="116"/>
    </location>
    <ligand>
        <name>Ca(2+)</name>
        <dbReference type="ChEBI" id="CHEBI:29108"/>
        <label>2</label>
    </ligand>
</feature>